<evidence type="ECO:0000256" key="1">
    <source>
        <dbReference type="SAM" id="MobiDB-lite"/>
    </source>
</evidence>
<evidence type="ECO:0000305" key="2"/>
<organism>
    <name type="scientific">Arabidopsis thaliana</name>
    <name type="common">Mouse-ear cress</name>
    <dbReference type="NCBI Taxonomy" id="3702"/>
    <lineage>
        <taxon>Eukaryota</taxon>
        <taxon>Viridiplantae</taxon>
        <taxon>Streptophyta</taxon>
        <taxon>Embryophyta</taxon>
        <taxon>Tracheophyta</taxon>
        <taxon>Spermatophyta</taxon>
        <taxon>Magnoliopsida</taxon>
        <taxon>eudicotyledons</taxon>
        <taxon>Gunneridae</taxon>
        <taxon>Pentapetalae</taxon>
        <taxon>rosids</taxon>
        <taxon>malvids</taxon>
        <taxon>Brassicales</taxon>
        <taxon>Brassicaceae</taxon>
        <taxon>Camelineae</taxon>
        <taxon>Arabidopsis</taxon>
    </lineage>
</organism>
<feature type="chain" id="PRO_0000356109" description="Pentatricopeptide repeat-containing protein At3g23020">
    <location>
        <begin position="1"/>
        <end position="842"/>
    </location>
</feature>
<feature type="repeat" description="PPR 1">
    <location>
        <begin position="186"/>
        <end position="220"/>
    </location>
</feature>
<feature type="repeat" description="PPR 2">
    <location>
        <begin position="221"/>
        <end position="255"/>
    </location>
</feature>
<feature type="repeat" description="PPR 3">
    <location>
        <begin position="256"/>
        <end position="290"/>
    </location>
</feature>
<feature type="repeat" description="PPR 4">
    <location>
        <begin position="297"/>
        <end position="331"/>
    </location>
</feature>
<feature type="repeat" description="PPR 5">
    <location>
        <begin position="332"/>
        <end position="362"/>
    </location>
</feature>
<feature type="repeat" description="PPR 6">
    <location>
        <begin position="366"/>
        <end position="400"/>
    </location>
</feature>
<feature type="repeat" description="PPR 7">
    <location>
        <begin position="401"/>
        <end position="435"/>
    </location>
</feature>
<feature type="repeat" description="PPR 8">
    <location>
        <begin position="436"/>
        <end position="470"/>
    </location>
</feature>
<feature type="repeat" description="PPR 9">
    <location>
        <begin position="474"/>
        <end position="500"/>
    </location>
</feature>
<feature type="repeat" description="PPR 10">
    <location>
        <begin position="504"/>
        <end position="538"/>
    </location>
</feature>
<feature type="repeat" description="PPR 11">
    <location>
        <begin position="539"/>
        <end position="573"/>
    </location>
</feature>
<feature type="repeat" description="PPR 12">
    <location>
        <begin position="574"/>
        <end position="608"/>
    </location>
</feature>
<feature type="repeat" description="PPR 13">
    <location>
        <begin position="609"/>
        <end position="643"/>
    </location>
</feature>
<feature type="repeat" description="PPR 14">
    <location>
        <begin position="644"/>
        <end position="674"/>
    </location>
</feature>
<feature type="repeat" description="PPR 15">
    <location>
        <begin position="682"/>
        <end position="712"/>
    </location>
</feature>
<feature type="repeat" description="PPR 16">
    <location>
        <begin position="716"/>
        <end position="750"/>
    </location>
</feature>
<feature type="repeat" description="PPR 17">
    <location>
        <begin position="751"/>
        <end position="785"/>
    </location>
</feature>
<feature type="repeat" description="PPR 18">
    <location>
        <begin position="786"/>
        <end position="820"/>
    </location>
</feature>
<feature type="region of interest" description="Disordered" evidence="1">
    <location>
        <begin position="40"/>
        <end position="61"/>
    </location>
</feature>
<feature type="compositionally biased region" description="Basic and acidic residues" evidence="1">
    <location>
        <begin position="45"/>
        <end position="59"/>
    </location>
</feature>
<comment type="similarity">
    <text evidence="2">Belongs to the PPR family. P subfamily.</text>
</comment>
<comment type="online information" name="Pentatricopeptide repeat proteins">
    <link uri="https://ppr.plantenergy.uwa.edu.au"/>
</comment>
<protein>
    <recommendedName>
        <fullName>Pentatricopeptide repeat-containing protein At3g23020</fullName>
    </recommendedName>
</protein>
<name>PP250_ARATH</name>
<proteinExistence type="evidence at transcript level"/>
<keyword id="KW-1185">Reference proteome</keyword>
<keyword id="KW-0677">Repeat</keyword>
<reference key="1">
    <citation type="journal article" date="2000" name="DNA Res.">
        <title>Structural analysis of Arabidopsis thaliana chromosome 3. I. Sequence features of the regions of 4,504,864 bp covered by sixty P1 and TAC clones.</title>
        <authorList>
            <person name="Sato S."/>
            <person name="Nakamura Y."/>
            <person name="Kaneko T."/>
            <person name="Katoh T."/>
            <person name="Asamizu E."/>
            <person name="Tabata S."/>
        </authorList>
    </citation>
    <scope>NUCLEOTIDE SEQUENCE [LARGE SCALE GENOMIC DNA]</scope>
    <source>
        <strain>cv. Columbia</strain>
    </source>
</reference>
<reference key="2">
    <citation type="journal article" date="2017" name="Plant J.">
        <title>Araport11: a complete reannotation of the Arabidopsis thaliana reference genome.</title>
        <authorList>
            <person name="Cheng C.Y."/>
            <person name="Krishnakumar V."/>
            <person name="Chan A.P."/>
            <person name="Thibaud-Nissen F."/>
            <person name="Schobel S."/>
            <person name="Town C.D."/>
        </authorList>
    </citation>
    <scope>GENOME REANNOTATION</scope>
    <source>
        <strain>cv. Columbia</strain>
    </source>
</reference>
<reference key="3">
    <citation type="journal article" date="2004" name="Plant Cell">
        <title>Genome-wide analysis of Arabidopsis pentatricopeptide repeat proteins reveals their essential role in organelle biogenesis.</title>
        <authorList>
            <person name="Lurin C."/>
            <person name="Andres C."/>
            <person name="Aubourg S."/>
            <person name="Bellaoui M."/>
            <person name="Bitton F."/>
            <person name="Bruyere C."/>
            <person name="Caboche M."/>
            <person name="Debast C."/>
            <person name="Gualberto J."/>
            <person name="Hoffmann B."/>
            <person name="Lecharny A."/>
            <person name="Le Ret M."/>
            <person name="Martin-Magniette M.-L."/>
            <person name="Mireau H."/>
            <person name="Peeters N."/>
            <person name="Renou J.-P."/>
            <person name="Szurek B."/>
            <person name="Taconnat L."/>
            <person name="Small I."/>
        </authorList>
    </citation>
    <scope>GENE FAMILY</scope>
</reference>
<accession>Q9LS88</accession>
<sequence>MLLNLRLDGSSLHVLCSTKTLPISSPLDKFPSFKKLKQNYVPGTHESDKGPQRSTRNGDRGCGTVAHEVVAGKNLLLVNPSNGCVGKSGIIDGFVDKRSKDARFGGNGLVSEVHTKCSTKRLSYGGCIPAILEALDSIEDVEDALSPWAERLSNKERTIILKEQIHWERAVEIFEWFKSKGCYELNVIHYNIMLRILGKACKWRYVQSLWDEMIRKGIKPINSTYGTLIDVYSKGGLKVHALCWLGKMSKIGMQPDEVTTGIVLQMYKKAREFQKAEEFFKKWSCDENKADSHVCLSSYTYNTMIDTYGKSGQIKEASETFKRMLEEGIVPTTVTFNTMIHIYGNNGQLGEVTSLMKTMKLHCAPDTRTYNILISLHTKNNDIERAGAYFKEMKDDGLKPDPVSYRTLLYAFSIRHMVEEAEGLIAEMDDDNVEIDEYTQSALTRMYVEAEMLEKSWSWFKRFHVAGNMSSEGYSANIDAYGERGYLSEAERVFICCQEVNKRTVIEYNVMIKAYGISKSCEKACELFESMMSYGVTPDKCTYNTLVQILASADMPHKGRCYLEKMRETGYVSDCIPYCAVISSFVKLGQLNMAEEVYKEMVEYNIEPDVVVYGVLINAFADTGNVQQAMSYVEAMKEAGIPGNSVIYNSLIKLYTKVGYLDEAEAIYRKLLQSCNKTQYPDVYTSNCMINLYSERSMVRKAEAIFDSMKQRGEANEFTFAMMLCMYKKNGRFEEATQIAKQMREMKILTDPLSYNSVLGLFALDGRFKEAVETFKEMVSSGIQPDDSTFKSLGTILMKLGMSKKAVRKIEEIRKKEIKRGLELWISTLSSLVGIGDCVDEL</sequence>
<gene>
    <name type="ordered locus">At3g23020</name>
    <name type="ORF">MXC7.5</name>
</gene>
<dbReference type="EMBL" id="AB026655">
    <property type="protein sequence ID" value="BAB02093.1"/>
    <property type="molecule type" value="Genomic_DNA"/>
</dbReference>
<dbReference type="EMBL" id="CP002686">
    <property type="protein sequence ID" value="AEE76706.1"/>
    <property type="molecule type" value="Genomic_DNA"/>
</dbReference>
<dbReference type="RefSeq" id="NP_188942.1">
    <property type="nucleotide sequence ID" value="NM_113202.2"/>
</dbReference>
<dbReference type="SMR" id="Q9LS88"/>
<dbReference type="FunCoup" id="Q9LS88">
    <property type="interactions" value="703"/>
</dbReference>
<dbReference type="STRING" id="3702.Q9LS88"/>
<dbReference type="PaxDb" id="3702-AT3G23020.1"/>
<dbReference type="ProteomicsDB" id="249100"/>
<dbReference type="EnsemblPlants" id="AT3G23020.1">
    <property type="protein sequence ID" value="AT3G23020.1"/>
    <property type="gene ID" value="AT3G23020"/>
</dbReference>
<dbReference type="GeneID" id="821876"/>
<dbReference type="Gramene" id="AT3G23020.1">
    <property type="protein sequence ID" value="AT3G23020.1"/>
    <property type="gene ID" value="AT3G23020"/>
</dbReference>
<dbReference type="KEGG" id="ath:AT3G23020"/>
<dbReference type="Araport" id="AT3G23020"/>
<dbReference type="TAIR" id="AT3G23020"/>
<dbReference type="eggNOG" id="KOG4197">
    <property type="taxonomic scope" value="Eukaryota"/>
</dbReference>
<dbReference type="HOGENOM" id="CLU_011648_1_0_1"/>
<dbReference type="InParanoid" id="Q9LS88"/>
<dbReference type="OMA" id="CVCNVMI"/>
<dbReference type="OrthoDB" id="185373at2759"/>
<dbReference type="PhylomeDB" id="Q9LS88"/>
<dbReference type="PRO" id="PR:Q9LS88"/>
<dbReference type="Proteomes" id="UP000006548">
    <property type="component" value="Chromosome 3"/>
</dbReference>
<dbReference type="ExpressionAtlas" id="Q9LS88">
    <property type="expression patterns" value="baseline and differential"/>
</dbReference>
<dbReference type="GO" id="GO:0009507">
    <property type="term" value="C:chloroplast"/>
    <property type="evidence" value="ECO:0000314"/>
    <property type="project" value="TAIR"/>
</dbReference>
<dbReference type="GO" id="GO:1904821">
    <property type="term" value="P:chloroplast disassembly"/>
    <property type="evidence" value="ECO:0000316"/>
    <property type="project" value="TAIR"/>
</dbReference>
<dbReference type="GO" id="GO:0006355">
    <property type="term" value="P:regulation of DNA-templated transcription"/>
    <property type="evidence" value="ECO:0000316"/>
    <property type="project" value="TAIR"/>
</dbReference>
<dbReference type="GO" id="GO:0010343">
    <property type="term" value="P:singlet oxygen-mediated programmed cell death"/>
    <property type="evidence" value="ECO:0000316"/>
    <property type="project" value="TAIR"/>
</dbReference>
<dbReference type="FunFam" id="1.25.40.10:FF:002531">
    <property type="entry name" value="Pentatricopeptide repeat-containing protein At3g23020"/>
    <property type="match status" value="1"/>
</dbReference>
<dbReference type="FunFam" id="1.25.40.10:FF:000509">
    <property type="entry name" value="Pentatricopeptide repeat-containing protein At4g16390, chloroplastic"/>
    <property type="match status" value="1"/>
</dbReference>
<dbReference type="Gene3D" id="1.25.40.10">
    <property type="entry name" value="Tetratricopeptide repeat domain"/>
    <property type="match status" value="7"/>
</dbReference>
<dbReference type="InterPro" id="IPR051114">
    <property type="entry name" value="Mito_RNA_Proc_CCM1"/>
</dbReference>
<dbReference type="InterPro" id="IPR002885">
    <property type="entry name" value="Pentatricopeptide_rpt"/>
</dbReference>
<dbReference type="InterPro" id="IPR011990">
    <property type="entry name" value="TPR-like_helical_dom_sf"/>
</dbReference>
<dbReference type="NCBIfam" id="TIGR00756">
    <property type="entry name" value="PPR"/>
    <property type="match status" value="12"/>
</dbReference>
<dbReference type="PANTHER" id="PTHR47934:SF6">
    <property type="entry name" value="MITOCHONDRIAL GROUP I INTRON SPLICING FACTOR CCM1-RELATED"/>
    <property type="match status" value="1"/>
</dbReference>
<dbReference type="PANTHER" id="PTHR47934">
    <property type="entry name" value="PENTATRICOPEPTIDE REPEAT-CONTAINING PROTEIN PET309, MITOCHONDRIAL"/>
    <property type="match status" value="1"/>
</dbReference>
<dbReference type="Pfam" id="PF13041">
    <property type="entry name" value="PPR_2"/>
    <property type="match status" value="6"/>
</dbReference>
<dbReference type="Pfam" id="PF13812">
    <property type="entry name" value="PPR_3"/>
    <property type="match status" value="1"/>
</dbReference>
<dbReference type="SUPFAM" id="SSF81901">
    <property type="entry name" value="HCP-like"/>
    <property type="match status" value="1"/>
</dbReference>
<dbReference type="SUPFAM" id="SSF48452">
    <property type="entry name" value="TPR-like"/>
    <property type="match status" value="1"/>
</dbReference>
<dbReference type="PROSITE" id="PS51375">
    <property type="entry name" value="PPR"/>
    <property type="match status" value="17"/>
</dbReference>